<accession>B2HNF8</accession>
<name>MOBA_MYCMM</name>
<dbReference type="EC" id="2.7.7.77" evidence="1"/>
<dbReference type="EMBL" id="CP000854">
    <property type="protein sequence ID" value="ACC42211.1"/>
    <property type="molecule type" value="Genomic_DNA"/>
</dbReference>
<dbReference type="RefSeq" id="WP_012395403.1">
    <property type="nucleotide sequence ID" value="NC_010612.1"/>
</dbReference>
<dbReference type="SMR" id="B2HNF8"/>
<dbReference type="STRING" id="216594.MMAR_3801"/>
<dbReference type="KEGG" id="mmi:MMAR_3801"/>
<dbReference type="eggNOG" id="COG0746">
    <property type="taxonomic scope" value="Bacteria"/>
</dbReference>
<dbReference type="HOGENOM" id="CLU_055597_3_2_11"/>
<dbReference type="OrthoDB" id="9788394at2"/>
<dbReference type="Proteomes" id="UP000001190">
    <property type="component" value="Chromosome"/>
</dbReference>
<dbReference type="GO" id="GO:0005737">
    <property type="term" value="C:cytoplasm"/>
    <property type="evidence" value="ECO:0007669"/>
    <property type="project" value="UniProtKB-SubCell"/>
</dbReference>
<dbReference type="GO" id="GO:0005525">
    <property type="term" value="F:GTP binding"/>
    <property type="evidence" value="ECO:0007669"/>
    <property type="project" value="UniProtKB-UniRule"/>
</dbReference>
<dbReference type="GO" id="GO:0046872">
    <property type="term" value="F:metal ion binding"/>
    <property type="evidence" value="ECO:0007669"/>
    <property type="project" value="UniProtKB-KW"/>
</dbReference>
<dbReference type="GO" id="GO:0061603">
    <property type="term" value="F:molybdenum cofactor guanylyltransferase activity"/>
    <property type="evidence" value="ECO:0007669"/>
    <property type="project" value="UniProtKB-EC"/>
</dbReference>
<dbReference type="GO" id="GO:0006777">
    <property type="term" value="P:Mo-molybdopterin cofactor biosynthetic process"/>
    <property type="evidence" value="ECO:0007669"/>
    <property type="project" value="UniProtKB-KW"/>
</dbReference>
<dbReference type="CDD" id="cd02503">
    <property type="entry name" value="MobA"/>
    <property type="match status" value="1"/>
</dbReference>
<dbReference type="Gene3D" id="3.90.550.10">
    <property type="entry name" value="Spore Coat Polysaccharide Biosynthesis Protein SpsA, Chain A"/>
    <property type="match status" value="1"/>
</dbReference>
<dbReference type="HAMAP" id="MF_00316">
    <property type="entry name" value="MobA"/>
    <property type="match status" value="1"/>
</dbReference>
<dbReference type="InterPro" id="IPR025877">
    <property type="entry name" value="MobA-like_NTP_Trfase"/>
</dbReference>
<dbReference type="InterPro" id="IPR013482">
    <property type="entry name" value="Molybde_CF_guanTrfase"/>
</dbReference>
<dbReference type="InterPro" id="IPR029044">
    <property type="entry name" value="Nucleotide-diphossugar_trans"/>
</dbReference>
<dbReference type="NCBIfam" id="NF001855">
    <property type="entry name" value="PRK00576.1"/>
    <property type="match status" value="1"/>
</dbReference>
<dbReference type="PANTHER" id="PTHR19136">
    <property type="entry name" value="MOLYBDENUM COFACTOR GUANYLYLTRANSFERASE"/>
    <property type="match status" value="1"/>
</dbReference>
<dbReference type="PANTHER" id="PTHR19136:SF81">
    <property type="entry name" value="MOLYBDENUM COFACTOR GUANYLYLTRANSFERASE"/>
    <property type="match status" value="1"/>
</dbReference>
<dbReference type="Pfam" id="PF12804">
    <property type="entry name" value="NTP_transf_3"/>
    <property type="match status" value="1"/>
</dbReference>
<dbReference type="SUPFAM" id="SSF53448">
    <property type="entry name" value="Nucleotide-diphospho-sugar transferases"/>
    <property type="match status" value="1"/>
</dbReference>
<sequence>MAGRESDAVSLAGVVLAGGESRRMGRDKATLVLPGGSTTMVEHVLGIVGQRCEPVFVMAAQGQPLPPLQVPVLRDELRGLGPLPATGRGLRAAAEAGARFAFVCAVDMPGLTVDLIDDLVRSAIETDAEVVLPWDGRSHYLAAIYRTDLAERVDALVAAGERKMSALADSSDTQRIVMSDSAPLANVNTAADLPAPVRPGH</sequence>
<evidence type="ECO:0000255" key="1">
    <source>
        <dbReference type="HAMAP-Rule" id="MF_00316"/>
    </source>
</evidence>
<organism>
    <name type="scientific">Mycobacterium marinum (strain ATCC BAA-535 / M)</name>
    <dbReference type="NCBI Taxonomy" id="216594"/>
    <lineage>
        <taxon>Bacteria</taxon>
        <taxon>Bacillati</taxon>
        <taxon>Actinomycetota</taxon>
        <taxon>Actinomycetes</taxon>
        <taxon>Mycobacteriales</taxon>
        <taxon>Mycobacteriaceae</taxon>
        <taxon>Mycobacterium</taxon>
        <taxon>Mycobacterium ulcerans group</taxon>
    </lineage>
</organism>
<keyword id="KW-0963">Cytoplasm</keyword>
<keyword id="KW-0342">GTP-binding</keyword>
<keyword id="KW-0460">Magnesium</keyword>
<keyword id="KW-0479">Metal-binding</keyword>
<keyword id="KW-0501">Molybdenum cofactor biosynthesis</keyword>
<keyword id="KW-0547">Nucleotide-binding</keyword>
<keyword id="KW-1185">Reference proteome</keyword>
<keyword id="KW-0808">Transferase</keyword>
<gene>
    <name evidence="1" type="primary">mobA</name>
    <name type="ordered locus">MMAR_3801</name>
</gene>
<reference key="1">
    <citation type="journal article" date="2008" name="Genome Res.">
        <title>Insights from the complete genome sequence of Mycobacterium marinum on the evolution of Mycobacterium tuberculosis.</title>
        <authorList>
            <person name="Stinear T.P."/>
            <person name="Seemann T."/>
            <person name="Harrison P.F."/>
            <person name="Jenkin G.A."/>
            <person name="Davies J.K."/>
            <person name="Johnson P.D."/>
            <person name="Abdellah Z."/>
            <person name="Arrowsmith C."/>
            <person name="Chillingworth T."/>
            <person name="Churcher C."/>
            <person name="Clarke K."/>
            <person name="Cronin A."/>
            <person name="Davis P."/>
            <person name="Goodhead I."/>
            <person name="Holroyd N."/>
            <person name="Jagels K."/>
            <person name="Lord A."/>
            <person name="Moule S."/>
            <person name="Mungall K."/>
            <person name="Norbertczak H."/>
            <person name="Quail M.A."/>
            <person name="Rabbinowitsch E."/>
            <person name="Walker D."/>
            <person name="White B."/>
            <person name="Whitehead S."/>
            <person name="Small P.L."/>
            <person name="Brosch R."/>
            <person name="Ramakrishnan L."/>
            <person name="Fischbach M.A."/>
            <person name="Parkhill J."/>
            <person name="Cole S.T."/>
        </authorList>
    </citation>
    <scope>NUCLEOTIDE SEQUENCE [LARGE SCALE GENOMIC DNA]</scope>
    <source>
        <strain>ATCC BAA-535 / M</strain>
    </source>
</reference>
<comment type="function">
    <text evidence="1">Transfers a GMP moiety from GTP to Mo-molybdopterin (Mo-MPT) cofactor (Moco or molybdenum cofactor) to form Mo-molybdopterin guanine dinucleotide (Mo-MGD) cofactor.</text>
</comment>
<comment type="catalytic activity">
    <reaction evidence="1">
        <text>Mo-molybdopterin + GTP + H(+) = Mo-molybdopterin guanine dinucleotide + diphosphate</text>
        <dbReference type="Rhea" id="RHEA:34243"/>
        <dbReference type="ChEBI" id="CHEBI:15378"/>
        <dbReference type="ChEBI" id="CHEBI:33019"/>
        <dbReference type="ChEBI" id="CHEBI:37565"/>
        <dbReference type="ChEBI" id="CHEBI:71302"/>
        <dbReference type="ChEBI" id="CHEBI:71310"/>
        <dbReference type="EC" id="2.7.7.77"/>
    </reaction>
</comment>
<comment type="cofactor">
    <cofactor evidence="1">
        <name>Mg(2+)</name>
        <dbReference type="ChEBI" id="CHEBI:18420"/>
    </cofactor>
</comment>
<comment type="subcellular location">
    <subcellularLocation>
        <location evidence="1">Cytoplasm</location>
    </subcellularLocation>
</comment>
<comment type="domain">
    <text evidence="1">The N-terminal domain determines nucleotide recognition and specific binding, while the C-terminal domain determines the specific binding to the target protein.</text>
</comment>
<comment type="similarity">
    <text evidence="1">Belongs to the MobA family.</text>
</comment>
<feature type="chain" id="PRO_1000115801" description="Probable molybdenum cofactor guanylyltransferase">
    <location>
        <begin position="1"/>
        <end position="201"/>
    </location>
</feature>
<feature type="binding site" evidence="1">
    <location>
        <begin position="16"/>
        <end position="18"/>
    </location>
    <ligand>
        <name>GTP</name>
        <dbReference type="ChEBI" id="CHEBI:37565"/>
    </ligand>
</feature>
<feature type="binding site" evidence="1">
    <location>
        <position position="28"/>
    </location>
    <ligand>
        <name>GTP</name>
        <dbReference type="ChEBI" id="CHEBI:37565"/>
    </ligand>
</feature>
<feature type="binding site" evidence="1">
    <location>
        <position position="75"/>
    </location>
    <ligand>
        <name>GTP</name>
        <dbReference type="ChEBI" id="CHEBI:37565"/>
    </ligand>
</feature>
<feature type="binding site" evidence="1">
    <location>
        <position position="107"/>
    </location>
    <ligand>
        <name>GTP</name>
        <dbReference type="ChEBI" id="CHEBI:37565"/>
    </ligand>
</feature>
<feature type="binding site" evidence="1">
    <location>
        <position position="107"/>
    </location>
    <ligand>
        <name>Mg(2+)</name>
        <dbReference type="ChEBI" id="CHEBI:18420"/>
    </ligand>
</feature>
<proteinExistence type="inferred from homology"/>
<protein>
    <recommendedName>
        <fullName evidence="1">Probable molybdenum cofactor guanylyltransferase</fullName>
        <shortName evidence="1">MoCo guanylyltransferase</shortName>
        <ecNumber evidence="1">2.7.7.77</ecNumber>
    </recommendedName>
    <alternativeName>
        <fullName evidence="1">GTP:molybdopterin guanylyltransferase</fullName>
    </alternativeName>
    <alternativeName>
        <fullName evidence="1">Mo-MPT guanylyltransferase</fullName>
    </alternativeName>
    <alternativeName>
        <fullName evidence="1">Molybdopterin guanylyltransferase</fullName>
    </alternativeName>
    <alternativeName>
        <fullName evidence="1">Molybdopterin-guanine dinucleotide synthase</fullName>
        <shortName evidence="1">MGD synthase</shortName>
    </alternativeName>
</protein>